<dbReference type="EC" id="5.6.1.7" evidence="1"/>
<dbReference type="EMBL" id="CP000490">
    <property type="protein sequence ID" value="ABL71721.1"/>
    <property type="molecule type" value="Genomic_DNA"/>
</dbReference>
<dbReference type="EMBL" id="CP000491">
    <property type="protein sequence ID" value="ABL72648.1"/>
    <property type="molecule type" value="Genomic_DNA"/>
</dbReference>
<dbReference type="RefSeq" id="WP_011749890.1">
    <property type="nucleotide sequence ID" value="NC_008687.1"/>
</dbReference>
<dbReference type="SMR" id="A1B877"/>
<dbReference type="STRING" id="318586.Pden_3654"/>
<dbReference type="EnsemblBacteria" id="ABL71721">
    <property type="protein sequence ID" value="ABL71721"/>
    <property type="gene ID" value="Pden_3654"/>
</dbReference>
<dbReference type="EnsemblBacteria" id="ABL72648">
    <property type="protein sequence ID" value="ABL72648"/>
    <property type="gene ID" value="Pden_4585"/>
</dbReference>
<dbReference type="GeneID" id="93454613"/>
<dbReference type="KEGG" id="pde:Pden_3654"/>
<dbReference type="KEGG" id="pde:Pden_4585"/>
<dbReference type="eggNOG" id="COG0459">
    <property type="taxonomic scope" value="Bacteria"/>
</dbReference>
<dbReference type="HOGENOM" id="CLU_016503_1_1_5"/>
<dbReference type="OrthoDB" id="9766614at2"/>
<dbReference type="Proteomes" id="UP000000361">
    <property type="component" value="Chromosome 2"/>
</dbReference>
<dbReference type="Proteomes" id="UP000000361">
    <property type="component" value="Plasmid pPD1222"/>
</dbReference>
<dbReference type="GO" id="GO:0005737">
    <property type="term" value="C:cytoplasm"/>
    <property type="evidence" value="ECO:0007669"/>
    <property type="project" value="UniProtKB-SubCell"/>
</dbReference>
<dbReference type="GO" id="GO:0005524">
    <property type="term" value="F:ATP binding"/>
    <property type="evidence" value="ECO:0007669"/>
    <property type="project" value="UniProtKB-UniRule"/>
</dbReference>
<dbReference type="GO" id="GO:0140662">
    <property type="term" value="F:ATP-dependent protein folding chaperone"/>
    <property type="evidence" value="ECO:0007669"/>
    <property type="project" value="InterPro"/>
</dbReference>
<dbReference type="GO" id="GO:0016853">
    <property type="term" value="F:isomerase activity"/>
    <property type="evidence" value="ECO:0007669"/>
    <property type="project" value="UniProtKB-KW"/>
</dbReference>
<dbReference type="GO" id="GO:0051082">
    <property type="term" value="F:unfolded protein binding"/>
    <property type="evidence" value="ECO:0007669"/>
    <property type="project" value="UniProtKB-UniRule"/>
</dbReference>
<dbReference type="GO" id="GO:0042026">
    <property type="term" value="P:protein refolding"/>
    <property type="evidence" value="ECO:0007669"/>
    <property type="project" value="UniProtKB-UniRule"/>
</dbReference>
<dbReference type="CDD" id="cd03344">
    <property type="entry name" value="GroEL"/>
    <property type="match status" value="1"/>
</dbReference>
<dbReference type="FunFam" id="1.10.560.10:FF:000001">
    <property type="entry name" value="60 kDa chaperonin"/>
    <property type="match status" value="1"/>
</dbReference>
<dbReference type="FunFam" id="3.50.7.10:FF:000001">
    <property type="entry name" value="60 kDa chaperonin"/>
    <property type="match status" value="1"/>
</dbReference>
<dbReference type="Gene3D" id="3.50.7.10">
    <property type="entry name" value="GroEL"/>
    <property type="match status" value="1"/>
</dbReference>
<dbReference type="Gene3D" id="1.10.560.10">
    <property type="entry name" value="GroEL-like equatorial domain"/>
    <property type="match status" value="1"/>
</dbReference>
<dbReference type="Gene3D" id="3.30.260.10">
    <property type="entry name" value="TCP-1-like chaperonin intermediate domain"/>
    <property type="match status" value="1"/>
</dbReference>
<dbReference type="HAMAP" id="MF_00600">
    <property type="entry name" value="CH60"/>
    <property type="match status" value="1"/>
</dbReference>
<dbReference type="InterPro" id="IPR018370">
    <property type="entry name" value="Chaperonin_Cpn60_CS"/>
</dbReference>
<dbReference type="InterPro" id="IPR001844">
    <property type="entry name" value="Cpn60/GroEL"/>
</dbReference>
<dbReference type="InterPro" id="IPR002423">
    <property type="entry name" value="Cpn60/GroEL/TCP-1"/>
</dbReference>
<dbReference type="InterPro" id="IPR027409">
    <property type="entry name" value="GroEL-like_apical_dom_sf"/>
</dbReference>
<dbReference type="InterPro" id="IPR027413">
    <property type="entry name" value="GROEL-like_equatorial_sf"/>
</dbReference>
<dbReference type="InterPro" id="IPR027410">
    <property type="entry name" value="TCP-1-like_intermed_sf"/>
</dbReference>
<dbReference type="NCBIfam" id="TIGR02348">
    <property type="entry name" value="GroEL"/>
    <property type="match status" value="1"/>
</dbReference>
<dbReference type="NCBIfam" id="NF000592">
    <property type="entry name" value="PRK00013.1"/>
    <property type="match status" value="1"/>
</dbReference>
<dbReference type="NCBIfam" id="NF009487">
    <property type="entry name" value="PRK12849.1"/>
    <property type="match status" value="1"/>
</dbReference>
<dbReference type="NCBIfam" id="NF009488">
    <property type="entry name" value="PRK12850.1"/>
    <property type="match status" value="1"/>
</dbReference>
<dbReference type="NCBIfam" id="NF009489">
    <property type="entry name" value="PRK12851.1"/>
    <property type="match status" value="1"/>
</dbReference>
<dbReference type="PANTHER" id="PTHR45633">
    <property type="entry name" value="60 KDA HEAT SHOCK PROTEIN, MITOCHONDRIAL"/>
    <property type="match status" value="1"/>
</dbReference>
<dbReference type="Pfam" id="PF00118">
    <property type="entry name" value="Cpn60_TCP1"/>
    <property type="match status" value="1"/>
</dbReference>
<dbReference type="PRINTS" id="PR00298">
    <property type="entry name" value="CHAPERONIN60"/>
</dbReference>
<dbReference type="SUPFAM" id="SSF52029">
    <property type="entry name" value="GroEL apical domain-like"/>
    <property type="match status" value="1"/>
</dbReference>
<dbReference type="SUPFAM" id="SSF48592">
    <property type="entry name" value="GroEL equatorial domain-like"/>
    <property type="match status" value="1"/>
</dbReference>
<dbReference type="SUPFAM" id="SSF54849">
    <property type="entry name" value="GroEL-intermediate domain like"/>
    <property type="match status" value="1"/>
</dbReference>
<dbReference type="PROSITE" id="PS00296">
    <property type="entry name" value="CHAPERONINS_CPN60"/>
    <property type="match status" value="1"/>
</dbReference>
<evidence type="ECO:0000255" key="1">
    <source>
        <dbReference type="HAMAP-Rule" id="MF_00600"/>
    </source>
</evidence>
<evidence type="ECO:0000256" key="2">
    <source>
        <dbReference type="SAM" id="MobiDB-lite"/>
    </source>
</evidence>
<gene>
    <name evidence="1" type="primary">groEL1</name>
    <name evidence="1" type="synonym">groL1</name>
    <name type="ordered locus">Pden_3654</name>
</gene>
<gene>
    <name evidence="1" type="primary">groEL2</name>
    <name evidence="1" type="synonym">groL2</name>
    <name type="ordered locus">Pden_4585</name>
</gene>
<protein>
    <recommendedName>
        <fullName evidence="1">Chaperonin GroEL</fullName>
        <ecNumber evidence="1">5.6.1.7</ecNumber>
    </recommendedName>
    <alternativeName>
        <fullName evidence="1">60 kDa chaperonin</fullName>
    </alternativeName>
    <alternativeName>
        <fullName evidence="1">Chaperonin-60</fullName>
        <shortName evidence="1">Cpn60</shortName>
    </alternativeName>
</protein>
<name>CH60_PARDP</name>
<feature type="chain" id="PRO_0000332034" description="Chaperonin GroEL">
    <location>
        <begin position="1"/>
        <end position="545"/>
    </location>
</feature>
<feature type="region of interest" description="Disordered" evidence="2">
    <location>
        <begin position="526"/>
        <end position="545"/>
    </location>
</feature>
<feature type="compositionally biased region" description="Gly residues" evidence="2">
    <location>
        <begin position="536"/>
        <end position="545"/>
    </location>
</feature>
<feature type="binding site" evidence="1">
    <location>
        <begin position="30"/>
        <end position="33"/>
    </location>
    <ligand>
        <name>ATP</name>
        <dbReference type="ChEBI" id="CHEBI:30616"/>
    </ligand>
</feature>
<feature type="binding site" evidence="1">
    <location>
        <position position="51"/>
    </location>
    <ligand>
        <name>ATP</name>
        <dbReference type="ChEBI" id="CHEBI:30616"/>
    </ligand>
</feature>
<feature type="binding site" evidence="1">
    <location>
        <begin position="87"/>
        <end position="91"/>
    </location>
    <ligand>
        <name>ATP</name>
        <dbReference type="ChEBI" id="CHEBI:30616"/>
    </ligand>
</feature>
<feature type="binding site" evidence="1">
    <location>
        <position position="415"/>
    </location>
    <ligand>
        <name>ATP</name>
        <dbReference type="ChEBI" id="CHEBI:30616"/>
    </ligand>
</feature>
<feature type="binding site" evidence="1">
    <location>
        <position position="496"/>
    </location>
    <ligand>
        <name>ATP</name>
        <dbReference type="ChEBI" id="CHEBI:30616"/>
    </ligand>
</feature>
<proteinExistence type="inferred from homology"/>
<comment type="function">
    <text evidence="1">Together with its co-chaperonin GroES, plays an essential role in assisting protein folding. The GroEL-GroES system forms a nano-cage that allows encapsulation of the non-native substrate proteins and provides a physical environment optimized to promote and accelerate protein folding.</text>
</comment>
<comment type="catalytic activity">
    <reaction evidence="1">
        <text>ATP + H2O + a folded polypeptide = ADP + phosphate + an unfolded polypeptide.</text>
        <dbReference type="EC" id="5.6.1.7"/>
    </reaction>
</comment>
<comment type="subunit">
    <text evidence="1">Forms a cylinder of 14 subunits composed of two heptameric rings stacked back-to-back. Interacts with the co-chaperonin GroES.</text>
</comment>
<comment type="subcellular location">
    <subcellularLocation>
        <location evidence="1">Cytoplasm</location>
    </subcellularLocation>
</comment>
<comment type="similarity">
    <text evidence="1">Belongs to the chaperonin (HSP60) family.</text>
</comment>
<keyword id="KW-0067">ATP-binding</keyword>
<keyword id="KW-0143">Chaperone</keyword>
<keyword id="KW-0963">Cytoplasm</keyword>
<keyword id="KW-0413">Isomerase</keyword>
<keyword id="KW-0547">Nucleotide-binding</keyword>
<keyword id="KW-0614">Plasmid</keyword>
<keyword id="KW-1185">Reference proteome</keyword>
<geneLocation type="plasmid">
    <name>pPD1222</name>
</geneLocation>
<accession>A1B877</accession>
<organism>
    <name type="scientific">Paracoccus denitrificans (strain Pd 1222)</name>
    <dbReference type="NCBI Taxonomy" id="318586"/>
    <lineage>
        <taxon>Bacteria</taxon>
        <taxon>Pseudomonadati</taxon>
        <taxon>Pseudomonadota</taxon>
        <taxon>Alphaproteobacteria</taxon>
        <taxon>Rhodobacterales</taxon>
        <taxon>Paracoccaceae</taxon>
        <taxon>Paracoccus</taxon>
    </lineage>
</organism>
<reference key="1">
    <citation type="submission" date="2006-12" db="EMBL/GenBank/DDBJ databases">
        <title>Complete sequence of chromosome 2 of Paracoccus denitrificans PD1222.</title>
        <authorList>
            <person name="Copeland A."/>
            <person name="Lucas S."/>
            <person name="Lapidus A."/>
            <person name="Barry K."/>
            <person name="Detter J.C."/>
            <person name="Glavina del Rio T."/>
            <person name="Hammon N."/>
            <person name="Israni S."/>
            <person name="Dalin E."/>
            <person name="Tice H."/>
            <person name="Pitluck S."/>
            <person name="Munk A.C."/>
            <person name="Brettin T."/>
            <person name="Bruce D."/>
            <person name="Han C."/>
            <person name="Tapia R."/>
            <person name="Gilna P."/>
            <person name="Schmutz J."/>
            <person name="Larimer F."/>
            <person name="Land M."/>
            <person name="Hauser L."/>
            <person name="Kyrpides N."/>
            <person name="Lykidis A."/>
            <person name="Spiro S."/>
            <person name="Richardson D.J."/>
            <person name="Moir J.W.B."/>
            <person name="Ferguson S.J."/>
            <person name="van Spanning R.J.M."/>
            <person name="Richardson P."/>
        </authorList>
    </citation>
    <scope>NUCLEOTIDE SEQUENCE [LARGE SCALE GENOMIC DNA]</scope>
    <source>
        <strain>Pd 1222</strain>
    </source>
</reference>
<reference key="2">
    <citation type="submission" date="2006-12" db="EMBL/GenBank/DDBJ databases">
        <title>Complete sequence of plasmid 1 of Paracoccus denitrificans PD1222.</title>
        <authorList>
            <person name="Copeland A."/>
            <person name="Lucas S."/>
            <person name="Lapidus A."/>
            <person name="Barry K."/>
            <person name="Detter J.C."/>
            <person name="Glavina del Rio T."/>
            <person name="Hammon N."/>
            <person name="Israni S."/>
            <person name="Dalin E."/>
            <person name="Tice H."/>
            <person name="Pitluck S."/>
            <person name="Munk A.C."/>
            <person name="Brettin T."/>
            <person name="Bruce D."/>
            <person name="Han C."/>
            <person name="Tapia R."/>
            <person name="Gilna P."/>
            <person name="Schmutz J."/>
            <person name="Larimer F."/>
            <person name="Land M."/>
            <person name="Hauser L."/>
            <person name="Kyrpides N."/>
            <person name="Lykidis A."/>
            <person name="Spiro S."/>
            <person name="Richardson D.J."/>
            <person name="Moir J.W.B."/>
            <person name="Ferguson S.J."/>
            <person name="van Spanning R.J.M."/>
            <person name="Richardson P."/>
        </authorList>
    </citation>
    <scope>NUCLEOTIDE SEQUENCE [LARGE SCALE GENOMIC DNA]</scope>
    <source>
        <strain>Pd 1222</strain>
        <plasmid>pPD1222</plasmid>
    </source>
</reference>
<sequence length="545" mass="57721">MAAKEVKFNSDARDRMLKGVNILADAVKVTLGPKGRNVVIDKSFGAPRITKDGVSVAKEIELSDKFENMGAQMVREVASRTNDEAGDGTTTATVLAQAIVREGLKAVAAGMNPMDLKRGIDVATAKVVEAIKSAARPVNDSSEVAQVGTISANGESFIGQQIAEAMQRVGNEGVITVEENKGMETEVEVVEGMQFDRGYLSPYFVTNADKMIAELEDAYILLHEKKLSSLQPMVPLLESVIQSQKPLLIVAEDVEGEALATLVVNKLRGGLKIAAVKAPGFGDRRKAMLQDIAILTGGQVISEDLGMKLENVTIDMLGRAKKVSINKDNTTIVDGAGEKAEIEARVSQIRQQIEETTSDYDREKLQERVAKLAGGVAVIRVGGMTEIEVKERKDRVDDALNATRAAVQEGIVVGGGVALVQGAKVLEGLSGANSDQDAGIAIIRRALEAPMRQIAENAGVDGAVVAGKVRESSDKAFGFNAQTEEYGDMFKFGVIDPAKVVRTALEDAASVAGLLITTEAMIAEKPEPKAPAGGMPDMGGMGGMM</sequence>